<keyword id="KW-0002">3D-structure</keyword>
<keyword id="KW-1185">Reference proteome</keyword>
<keyword id="KW-0687">Ribonucleoprotein</keyword>
<keyword id="KW-0689">Ribosomal protein</keyword>
<reference key="1">
    <citation type="journal article" date="1999" name="Nature">
        <title>Evidence for lateral gene transfer between Archaea and Bacteria from genome sequence of Thermotoga maritima.</title>
        <authorList>
            <person name="Nelson K.E."/>
            <person name="Clayton R.A."/>
            <person name="Gill S.R."/>
            <person name="Gwinn M.L."/>
            <person name="Dodson R.J."/>
            <person name="Haft D.H."/>
            <person name="Hickey E.K."/>
            <person name="Peterson J.D."/>
            <person name="Nelson W.C."/>
            <person name="Ketchum K.A."/>
            <person name="McDonald L.A."/>
            <person name="Utterback T.R."/>
            <person name="Malek J.A."/>
            <person name="Linher K.D."/>
            <person name="Garrett M.M."/>
            <person name="Stewart A.M."/>
            <person name="Cotton M.D."/>
            <person name="Pratt M.S."/>
            <person name="Phillips C.A."/>
            <person name="Richardson D.L."/>
            <person name="Heidelberg J.F."/>
            <person name="Sutton G.G."/>
            <person name="Fleischmann R.D."/>
            <person name="Eisen J.A."/>
            <person name="White O."/>
            <person name="Salzberg S.L."/>
            <person name="Smith H.O."/>
            <person name="Venter J.C."/>
            <person name="Fraser C.M."/>
        </authorList>
    </citation>
    <scope>NUCLEOTIDE SEQUENCE [LARGE SCALE GENOMIC DNA]</scope>
    <source>
        <strain>ATCC 43589 / DSM 3109 / JCM 10099 / NBRC 100826 / MSB8</strain>
    </source>
</reference>
<comment type="similarity">
    <text evidence="2">Belongs to the bacterial ribosomal protein bL28 family.</text>
</comment>
<comment type="sequence caution" evidence="2">
    <conflict type="erroneous initiation">
        <sequence resource="EMBL-CDS" id="AAD35344"/>
    </conflict>
</comment>
<sequence length="70" mass="7807">MAKRCEVCGKAPRSGNTVSHSDKKSGRWFRPNLQKVRVVLPDGTIKRMRVCTSCLKSGKVKKYVGQVSEV</sequence>
<gene>
    <name type="primary">rpmB</name>
    <name type="ordered locus">TM_0255</name>
</gene>
<name>RL28_THEMA</name>
<organism>
    <name type="scientific">Thermotoga maritima (strain ATCC 43589 / DSM 3109 / JCM 10099 / NBRC 100826 / MSB8)</name>
    <dbReference type="NCBI Taxonomy" id="243274"/>
    <lineage>
        <taxon>Bacteria</taxon>
        <taxon>Thermotogati</taxon>
        <taxon>Thermotogota</taxon>
        <taxon>Thermotogae</taxon>
        <taxon>Thermotogales</taxon>
        <taxon>Thermotogaceae</taxon>
        <taxon>Thermotoga</taxon>
    </lineage>
</organism>
<accession>Q9WY96</accession>
<proteinExistence type="evidence at protein level"/>
<protein>
    <recommendedName>
        <fullName evidence="2">Large ribosomal subunit protein bL28</fullName>
    </recommendedName>
    <alternativeName>
        <fullName>50S ribosomal protein L28</fullName>
    </alternativeName>
</protein>
<dbReference type="EMBL" id="AE000512">
    <property type="protein sequence ID" value="AAD35344.1"/>
    <property type="status" value="ALT_INIT"/>
    <property type="molecule type" value="Genomic_DNA"/>
</dbReference>
<dbReference type="PIR" id="G72399">
    <property type="entry name" value="G72399"/>
</dbReference>
<dbReference type="RefSeq" id="NP_228069.1">
    <property type="nucleotide sequence ID" value="NC_000853.1"/>
</dbReference>
<dbReference type="PDB" id="2JZ6">
    <property type="method" value="NMR"/>
    <property type="chains" value="A=1-70"/>
</dbReference>
<dbReference type="PDBsum" id="2JZ6"/>
<dbReference type="BMRB" id="Q9WY96"/>
<dbReference type="SMR" id="Q9WY96"/>
<dbReference type="FunCoup" id="Q9WY96">
    <property type="interactions" value="164"/>
</dbReference>
<dbReference type="STRING" id="243274.TM_0255"/>
<dbReference type="PaxDb" id="243274-THEMA_03450"/>
<dbReference type="EnsemblBacteria" id="AAD35344">
    <property type="protein sequence ID" value="AAD35344"/>
    <property type="gene ID" value="TM_0255"/>
</dbReference>
<dbReference type="KEGG" id="tma:TM0255"/>
<dbReference type="PATRIC" id="fig|243274.5.peg.258"/>
<dbReference type="eggNOG" id="COG0227">
    <property type="taxonomic scope" value="Bacteria"/>
</dbReference>
<dbReference type="InParanoid" id="Q9WY96"/>
<dbReference type="OrthoDB" id="9805609at2"/>
<dbReference type="EvolutionaryTrace" id="Q9WY96"/>
<dbReference type="Proteomes" id="UP000008183">
    <property type="component" value="Chromosome"/>
</dbReference>
<dbReference type="GO" id="GO:1990904">
    <property type="term" value="C:ribonucleoprotein complex"/>
    <property type="evidence" value="ECO:0007669"/>
    <property type="project" value="UniProtKB-KW"/>
</dbReference>
<dbReference type="GO" id="GO:0005840">
    <property type="term" value="C:ribosome"/>
    <property type="evidence" value="ECO:0007669"/>
    <property type="project" value="UniProtKB-KW"/>
</dbReference>
<dbReference type="GO" id="GO:0003735">
    <property type="term" value="F:structural constituent of ribosome"/>
    <property type="evidence" value="ECO:0007669"/>
    <property type="project" value="InterPro"/>
</dbReference>
<dbReference type="GO" id="GO:0006412">
    <property type="term" value="P:translation"/>
    <property type="evidence" value="ECO:0007669"/>
    <property type="project" value="UniProtKB-UniRule"/>
</dbReference>
<dbReference type="Gene3D" id="2.30.170.40">
    <property type="entry name" value="Ribosomal protein L28/L24"/>
    <property type="match status" value="1"/>
</dbReference>
<dbReference type="HAMAP" id="MF_00373">
    <property type="entry name" value="Ribosomal_bL28"/>
    <property type="match status" value="1"/>
</dbReference>
<dbReference type="InterPro" id="IPR050096">
    <property type="entry name" value="Bacterial_rp_bL28"/>
</dbReference>
<dbReference type="InterPro" id="IPR026569">
    <property type="entry name" value="Ribosomal_bL28"/>
</dbReference>
<dbReference type="InterPro" id="IPR034704">
    <property type="entry name" value="Ribosomal_bL28/bL31-like_sf"/>
</dbReference>
<dbReference type="InterPro" id="IPR001383">
    <property type="entry name" value="Ribosomal_bL28_bact-type"/>
</dbReference>
<dbReference type="InterPro" id="IPR037147">
    <property type="entry name" value="Ribosomal_bL28_sf"/>
</dbReference>
<dbReference type="NCBIfam" id="TIGR00009">
    <property type="entry name" value="L28"/>
    <property type="match status" value="1"/>
</dbReference>
<dbReference type="PANTHER" id="PTHR39080">
    <property type="entry name" value="50S RIBOSOMAL PROTEIN L28"/>
    <property type="match status" value="1"/>
</dbReference>
<dbReference type="PANTHER" id="PTHR39080:SF1">
    <property type="entry name" value="LARGE RIBOSOMAL SUBUNIT PROTEIN BL28A"/>
    <property type="match status" value="1"/>
</dbReference>
<dbReference type="Pfam" id="PF00830">
    <property type="entry name" value="Ribosomal_L28"/>
    <property type="match status" value="1"/>
</dbReference>
<dbReference type="SUPFAM" id="SSF143800">
    <property type="entry name" value="L28p-like"/>
    <property type="match status" value="1"/>
</dbReference>
<feature type="chain" id="PRO_0000178576" description="Large ribosomal subunit protein bL28">
    <location>
        <begin position="1"/>
        <end position="70"/>
    </location>
</feature>
<feature type="region of interest" description="Disordered" evidence="1">
    <location>
        <begin position="1"/>
        <end position="26"/>
    </location>
</feature>
<feature type="turn" evidence="3">
    <location>
        <begin position="6"/>
        <end position="8"/>
    </location>
</feature>
<feature type="strand" evidence="3">
    <location>
        <begin position="26"/>
        <end position="28"/>
    </location>
</feature>
<feature type="strand" evidence="3">
    <location>
        <begin position="33"/>
        <end position="40"/>
    </location>
</feature>
<feature type="turn" evidence="3">
    <location>
        <begin position="41"/>
        <end position="43"/>
    </location>
</feature>
<feature type="strand" evidence="3">
    <location>
        <begin position="44"/>
        <end position="51"/>
    </location>
</feature>
<feature type="helix" evidence="3">
    <location>
        <begin position="52"/>
        <end position="57"/>
    </location>
</feature>
<evidence type="ECO:0000256" key="1">
    <source>
        <dbReference type="SAM" id="MobiDB-lite"/>
    </source>
</evidence>
<evidence type="ECO:0000305" key="2"/>
<evidence type="ECO:0007829" key="3">
    <source>
        <dbReference type="PDB" id="2JZ6"/>
    </source>
</evidence>